<gene>
    <name evidence="1" type="primary">coaE</name>
    <name type="ordered locus">LA_3863</name>
</gene>
<proteinExistence type="inferred from homology"/>
<feature type="chain" id="PRO_0000172956" description="Dephospho-CoA kinase">
    <location>
        <begin position="1"/>
        <end position="207"/>
    </location>
</feature>
<feature type="domain" description="DPCK" evidence="1">
    <location>
        <begin position="12"/>
        <end position="207"/>
    </location>
</feature>
<feature type="binding site" evidence="1">
    <location>
        <begin position="20"/>
        <end position="25"/>
    </location>
    <ligand>
        <name>ATP</name>
        <dbReference type="ChEBI" id="CHEBI:30616"/>
    </ligand>
</feature>
<comment type="function">
    <text evidence="1">Catalyzes the phosphorylation of the 3'-hydroxyl group of dephosphocoenzyme A to form coenzyme A.</text>
</comment>
<comment type="catalytic activity">
    <reaction evidence="1">
        <text>3'-dephospho-CoA + ATP = ADP + CoA + H(+)</text>
        <dbReference type="Rhea" id="RHEA:18245"/>
        <dbReference type="ChEBI" id="CHEBI:15378"/>
        <dbReference type="ChEBI" id="CHEBI:30616"/>
        <dbReference type="ChEBI" id="CHEBI:57287"/>
        <dbReference type="ChEBI" id="CHEBI:57328"/>
        <dbReference type="ChEBI" id="CHEBI:456216"/>
        <dbReference type="EC" id="2.7.1.24"/>
    </reaction>
</comment>
<comment type="pathway">
    <text evidence="1">Cofactor biosynthesis; coenzyme A biosynthesis; CoA from (R)-pantothenate: step 5/5.</text>
</comment>
<comment type="subcellular location">
    <subcellularLocation>
        <location evidence="1">Cytoplasm</location>
    </subcellularLocation>
</comment>
<comment type="similarity">
    <text evidence="1">Belongs to the CoaE family.</text>
</comment>
<sequence length="207" mass="23369">MQNSDSGKKTFLIGITGMIGGGKSTATKILEEMGCFGINADRLAKRYTEPDSPILIELVELLGSEILDEQGKPDRKKISEIVFNNPEKLSRLNQLIHPLVRKDFQKILETTAKGKMVIWEVPLLFETDAYTLCDATVTVDSDPEESILRTISRDKVKKEDVLARIKNQLPLTEKLKRADYILRNRGNIDSLREECKSLYSTLLGKML</sequence>
<protein>
    <recommendedName>
        <fullName evidence="1">Dephospho-CoA kinase</fullName>
        <ecNumber evidence="1">2.7.1.24</ecNumber>
    </recommendedName>
    <alternativeName>
        <fullName evidence="1">Dephosphocoenzyme A kinase</fullName>
    </alternativeName>
</protein>
<accession>Q8EZJ0</accession>
<keyword id="KW-0067">ATP-binding</keyword>
<keyword id="KW-0173">Coenzyme A biosynthesis</keyword>
<keyword id="KW-0963">Cytoplasm</keyword>
<keyword id="KW-0418">Kinase</keyword>
<keyword id="KW-0547">Nucleotide-binding</keyword>
<keyword id="KW-1185">Reference proteome</keyword>
<keyword id="KW-0808">Transferase</keyword>
<name>COAE_LEPIN</name>
<evidence type="ECO:0000255" key="1">
    <source>
        <dbReference type="HAMAP-Rule" id="MF_00376"/>
    </source>
</evidence>
<dbReference type="EC" id="2.7.1.24" evidence="1"/>
<dbReference type="EMBL" id="AE010300">
    <property type="protein sequence ID" value="AAN51061.2"/>
    <property type="molecule type" value="Genomic_DNA"/>
</dbReference>
<dbReference type="RefSeq" id="NP_714043.2">
    <property type="nucleotide sequence ID" value="NC_004342.2"/>
</dbReference>
<dbReference type="RefSeq" id="WP_001181518.1">
    <property type="nucleotide sequence ID" value="NC_004342.2"/>
</dbReference>
<dbReference type="SMR" id="Q8EZJ0"/>
<dbReference type="FunCoup" id="Q8EZJ0">
    <property type="interactions" value="377"/>
</dbReference>
<dbReference type="STRING" id="189518.LA_3863"/>
<dbReference type="PaxDb" id="189518-LA_3863"/>
<dbReference type="EnsemblBacteria" id="AAN51061">
    <property type="protein sequence ID" value="AAN51061"/>
    <property type="gene ID" value="LA_3863"/>
</dbReference>
<dbReference type="KEGG" id="lil:LA_3863"/>
<dbReference type="PATRIC" id="fig|189518.3.peg.3834"/>
<dbReference type="HOGENOM" id="CLU_057180_3_1_12"/>
<dbReference type="InParanoid" id="Q8EZJ0"/>
<dbReference type="OrthoDB" id="9812943at2"/>
<dbReference type="UniPathway" id="UPA00241">
    <property type="reaction ID" value="UER00356"/>
</dbReference>
<dbReference type="Proteomes" id="UP000001408">
    <property type="component" value="Chromosome I"/>
</dbReference>
<dbReference type="GO" id="GO:0005737">
    <property type="term" value="C:cytoplasm"/>
    <property type="evidence" value="ECO:0007669"/>
    <property type="project" value="UniProtKB-SubCell"/>
</dbReference>
<dbReference type="GO" id="GO:0005524">
    <property type="term" value="F:ATP binding"/>
    <property type="evidence" value="ECO:0007669"/>
    <property type="project" value="UniProtKB-UniRule"/>
</dbReference>
<dbReference type="GO" id="GO:0004140">
    <property type="term" value="F:dephospho-CoA kinase activity"/>
    <property type="evidence" value="ECO:0000318"/>
    <property type="project" value="GO_Central"/>
</dbReference>
<dbReference type="GO" id="GO:0015937">
    <property type="term" value="P:coenzyme A biosynthetic process"/>
    <property type="evidence" value="ECO:0000318"/>
    <property type="project" value="GO_Central"/>
</dbReference>
<dbReference type="CDD" id="cd02022">
    <property type="entry name" value="DPCK"/>
    <property type="match status" value="1"/>
</dbReference>
<dbReference type="FunFam" id="3.40.50.300:FF:002168">
    <property type="entry name" value="Dephospho-CoA kinase"/>
    <property type="match status" value="1"/>
</dbReference>
<dbReference type="Gene3D" id="3.40.50.300">
    <property type="entry name" value="P-loop containing nucleotide triphosphate hydrolases"/>
    <property type="match status" value="1"/>
</dbReference>
<dbReference type="HAMAP" id="MF_00376">
    <property type="entry name" value="Dephospho_CoA_kinase"/>
    <property type="match status" value="1"/>
</dbReference>
<dbReference type="InterPro" id="IPR001977">
    <property type="entry name" value="Depp_CoAkinase"/>
</dbReference>
<dbReference type="InterPro" id="IPR027417">
    <property type="entry name" value="P-loop_NTPase"/>
</dbReference>
<dbReference type="NCBIfam" id="TIGR00152">
    <property type="entry name" value="dephospho-CoA kinase"/>
    <property type="match status" value="1"/>
</dbReference>
<dbReference type="PANTHER" id="PTHR10695:SF46">
    <property type="entry name" value="BIFUNCTIONAL COENZYME A SYNTHASE-RELATED"/>
    <property type="match status" value="1"/>
</dbReference>
<dbReference type="PANTHER" id="PTHR10695">
    <property type="entry name" value="DEPHOSPHO-COA KINASE-RELATED"/>
    <property type="match status" value="1"/>
</dbReference>
<dbReference type="Pfam" id="PF01121">
    <property type="entry name" value="CoaE"/>
    <property type="match status" value="1"/>
</dbReference>
<dbReference type="SUPFAM" id="SSF52540">
    <property type="entry name" value="P-loop containing nucleoside triphosphate hydrolases"/>
    <property type="match status" value="1"/>
</dbReference>
<dbReference type="PROSITE" id="PS51219">
    <property type="entry name" value="DPCK"/>
    <property type="match status" value="1"/>
</dbReference>
<reference key="1">
    <citation type="journal article" date="2003" name="Nature">
        <title>Unique physiological and pathogenic features of Leptospira interrogans revealed by whole-genome sequencing.</title>
        <authorList>
            <person name="Ren S.-X."/>
            <person name="Fu G."/>
            <person name="Jiang X.-G."/>
            <person name="Zeng R."/>
            <person name="Miao Y.-G."/>
            <person name="Xu H."/>
            <person name="Zhang Y.-X."/>
            <person name="Xiong H."/>
            <person name="Lu G."/>
            <person name="Lu L.-F."/>
            <person name="Jiang H.-Q."/>
            <person name="Jia J."/>
            <person name="Tu Y.-F."/>
            <person name="Jiang J.-X."/>
            <person name="Gu W.-Y."/>
            <person name="Zhang Y.-Q."/>
            <person name="Cai Z."/>
            <person name="Sheng H.-H."/>
            <person name="Yin H.-F."/>
            <person name="Zhang Y."/>
            <person name="Zhu G.-F."/>
            <person name="Wan M."/>
            <person name="Huang H.-L."/>
            <person name="Qian Z."/>
            <person name="Wang S.-Y."/>
            <person name="Ma W."/>
            <person name="Yao Z.-J."/>
            <person name="Shen Y."/>
            <person name="Qiang B.-Q."/>
            <person name="Xia Q.-C."/>
            <person name="Guo X.-K."/>
            <person name="Danchin A."/>
            <person name="Saint Girons I."/>
            <person name="Somerville R.L."/>
            <person name="Wen Y.-M."/>
            <person name="Shi M.-H."/>
            <person name="Chen Z."/>
            <person name="Xu J.-G."/>
            <person name="Zhao G.-P."/>
        </authorList>
    </citation>
    <scope>NUCLEOTIDE SEQUENCE [LARGE SCALE GENOMIC DNA]</scope>
    <source>
        <strain>56601</strain>
    </source>
</reference>
<organism>
    <name type="scientific">Leptospira interrogans serogroup Icterohaemorrhagiae serovar Lai (strain 56601)</name>
    <dbReference type="NCBI Taxonomy" id="189518"/>
    <lineage>
        <taxon>Bacteria</taxon>
        <taxon>Pseudomonadati</taxon>
        <taxon>Spirochaetota</taxon>
        <taxon>Spirochaetia</taxon>
        <taxon>Leptospirales</taxon>
        <taxon>Leptospiraceae</taxon>
        <taxon>Leptospira</taxon>
    </lineage>
</organism>